<organism>
    <name type="scientific">Salmonella arizonae (strain ATCC BAA-731 / CDC346-86 / RSK2980)</name>
    <dbReference type="NCBI Taxonomy" id="41514"/>
    <lineage>
        <taxon>Bacteria</taxon>
        <taxon>Pseudomonadati</taxon>
        <taxon>Pseudomonadota</taxon>
        <taxon>Gammaproteobacteria</taxon>
        <taxon>Enterobacterales</taxon>
        <taxon>Enterobacteriaceae</taxon>
        <taxon>Salmonella</taxon>
    </lineage>
</organism>
<protein>
    <recommendedName>
        <fullName evidence="1">Lipoyl synthase</fullName>
        <ecNumber evidence="1">2.8.1.8</ecNumber>
    </recommendedName>
    <alternativeName>
        <fullName evidence="1">Lip-syn</fullName>
        <shortName evidence="1">LS</shortName>
    </alternativeName>
    <alternativeName>
        <fullName evidence="1">Lipoate synthase</fullName>
    </alternativeName>
    <alternativeName>
        <fullName evidence="1">Lipoic acid synthase</fullName>
    </alternativeName>
    <alternativeName>
        <fullName evidence="1">Sulfur insertion protein LipA</fullName>
    </alternativeName>
</protein>
<comment type="function">
    <text evidence="1">Catalyzes the radical-mediated insertion of two sulfur atoms into the C-6 and C-8 positions of the octanoyl moiety bound to the lipoyl domains of lipoate-dependent enzymes, thereby converting the octanoylated domains into lipoylated derivatives.</text>
</comment>
<comment type="catalytic activity">
    <reaction evidence="1">
        <text>[[Fe-S] cluster scaffold protein carrying a second [4Fe-4S](2+) cluster] + N(6)-octanoyl-L-lysyl-[protein] + 2 oxidized [2Fe-2S]-[ferredoxin] + 2 S-adenosyl-L-methionine + 4 H(+) = [[Fe-S] cluster scaffold protein] + N(6)-[(R)-dihydrolipoyl]-L-lysyl-[protein] + 4 Fe(3+) + 2 hydrogen sulfide + 2 5'-deoxyadenosine + 2 L-methionine + 2 reduced [2Fe-2S]-[ferredoxin]</text>
        <dbReference type="Rhea" id="RHEA:16585"/>
        <dbReference type="Rhea" id="RHEA-COMP:9928"/>
        <dbReference type="Rhea" id="RHEA-COMP:10000"/>
        <dbReference type="Rhea" id="RHEA-COMP:10001"/>
        <dbReference type="Rhea" id="RHEA-COMP:10475"/>
        <dbReference type="Rhea" id="RHEA-COMP:14568"/>
        <dbReference type="Rhea" id="RHEA-COMP:14569"/>
        <dbReference type="ChEBI" id="CHEBI:15378"/>
        <dbReference type="ChEBI" id="CHEBI:17319"/>
        <dbReference type="ChEBI" id="CHEBI:29034"/>
        <dbReference type="ChEBI" id="CHEBI:29919"/>
        <dbReference type="ChEBI" id="CHEBI:33722"/>
        <dbReference type="ChEBI" id="CHEBI:33737"/>
        <dbReference type="ChEBI" id="CHEBI:33738"/>
        <dbReference type="ChEBI" id="CHEBI:57844"/>
        <dbReference type="ChEBI" id="CHEBI:59789"/>
        <dbReference type="ChEBI" id="CHEBI:78809"/>
        <dbReference type="ChEBI" id="CHEBI:83100"/>
        <dbReference type="EC" id="2.8.1.8"/>
    </reaction>
</comment>
<comment type="cofactor">
    <cofactor evidence="1">
        <name>[4Fe-4S] cluster</name>
        <dbReference type="ChEBI" id="CHEBI:49883"/>
    </cofactor>
    <text evidence="1">Binds 2 [4Fe-4S] clusters per subunit. One cluster is coordinated with 3 cysteines and an exchangeable S-adenosyl-L-methionine.</text>
</comment>
<comment type="pathway">
    <text evidence="1">Protein modification; protein lipoylation via endogenous pathway; protein N(6)-(lipoyl)lysine from octanoyl-[acyl-carrier-protein]: step 2/2.</text>
</comment>
<comment type="subcellular location">
    <subcellularLocation>
        <location evidence="1">Cytoplasm</location>
    </subcellularLocation>
</comment>
<comment type="similarity">
    <text evidence="1">Belongs to the radical SAM superfamily. Lipoyl synthase family.</text>
</comment>
<accession>A9MKE4</accession>
<name>LIPA_SALAR</name>
<dbReference type="EC" id="2.8.1.8" evidence="1"/>
<dbReference type="EMBL" id="CP000880">
    <property type="protein sequence ID" value="ABX22163.1"/>
    <property type="molecule type" value="Genomic_DNA"/>
</dbReference>
<dbReference type="SMR" id="A9MKE4"/>
<dbReference type="STRING" id="41514.SARI_02300"/>
<dbReference type="KEGG" id="ses:SARI_02300"/>
<dbReference type="HOGENOM" id="CLU_033144_2_1_6"/>
<dbReference type="UniPathway" id="UPA00538">
    <property type="reaction ID" value="UER00593"/>
</dbReference>
<dbReference type="Proteomes" id="UP000002084">
    <property type="component" value="Chromosome"/>
</dbReference>
<dbReference type="GO" id="GO:0005737">
    <property type="term" value="C:cytoplasm"/>
    <property type="evidence" value="ECO:0007669"/>
    <property type="project" value="UniProtKB-SubCell"/>
</dbReference>
<dbReference type="GO" id="GO:0051539">
    <property type="term" value="F:4 iron, 4 sulfur cluster binding"/>
    <property type="evidence" value="ECO:0007669"/>
    <property type="project" value="UniProtKB-UniRule"/>
</dbReference>
<dbReference type="GO" id="GO:0016992">
    <property type="term" value="F:lipoate synthase activity"/>
    <property type="evidence" value="ECO:0007669"/>
    <property type="project" value="UniProtKB-UniRule"/>
</dbReference>
<dbReference type="GO" id="GO:0046872">
    <property type="term" value="F:metal ion binding"/>
    <property type="evidence" value="ECO:0007669"/>
    <property type="project" value="UniProtKB-KW"/>
</dbReference>
<dbReference type="CDD" id="cd01335">
    <property type="entry name" value="Radical_SAM"/>
    <property type="match status" value="1"/>
</dbReference>
<dbReference type="FunFam" id="3.20.20.70:FF:000023">
    <property type="entry name" value="Lipoyl synthase"/>
    <property type="match status" value="1"/>
</dbReference>
<dbReference type="Gene3D" id="3.20.20.70">
    <property type="entry name" value="Aldolase class I"/>
    <property type="match status" value="1"/>
</dbReference>
<dbReference type="HAMAP" id="MF_00206">
    <property type="entry name" value="Lipoyl_synth"/>
    <property type="match status" value="1"/>
</dbReference>
<dbReference type="InterPro" id="IPR013785">
    <property type="entry name" value="Aldolase_TIM"/>
</dbReference>
<dbReference type="InterPro" id="IPR006638">
    <property type="entry name" value="Elp3/MiaA/NifB-like_rSAM"/>
</dbReference>
<dbReference type="InterPro" id="IPR031691">
    <property type="entry name" value="LIAS_N"/>
</dbReference>
<dbReference type="InterPro" id="IPR003698">
    <property type="entry name" value="Lipoyl_synth"/>
</dbReference>
<dbReference type="InterPro" id="IPR007197">
    <property type="entry name" value="rSAM"/>
</dbReference>
<dbReference type="NCBIfam" id="TIGR00510">
    <property type="entry name" value="lipA"/>
    <property type="match status" value="1"/>
</dbReference>
<dbReference type="NCBIfam" id="NF004019">
    <property type="entry name" value="PRK05481.1"/>
    <property type="match status" value="1"/>
</dbReference>
<dbReference type="NCBIfam" id="NF009544">
    <property type="entry name" value="PRK12928.1"/>
    <property type="match status" value="1"/>
</dbReference>
<dbReference type="PANTHER" id="PTHR10949">
    <property type="entry name" value="LIPOYL SYNTHASE"/>
    <property type="match status" value="1"/>
</dbReference>
<dbReference type="PANTHER" id="PTHR10949:SF0">
    <property type="entry name" value="LIPOYL SYNTHASE, MITOCHONDRIAL"/>
    <property type="match status" value="1"/>
</dbReference>
<dbReference type="Pfam" id="PF16881">
    <property type="entry name" value="LIAS_N"/>
    <property type="match status" value="1"/>
</dbReference>
<dbReference type="Pfam" id="PF04055">
    <property type="entry name" value="Radical_SAM"/>
    <property type="match status" value="1"/>
</dbReference>
<dbReference type="PIRSF" id="PIRSF005963">
    <property type="entry name" value="Lipoyl_synth"/>
    <property type="match status" value="1"/>
</dbReference>
<dbReference type="SFLD" id="SFLDF00271">
    <property type="entry name" value="lipoyl_synthase"/>
    <property type="match status" value="1"/>
</dbReference>
<dbReference type="SFLD" id="SFLDG01058">
    <property type="entry name" value="lipoyl_synthase_like"/>
    <property type="match status" value="1"/>
</dbReference>
<dbReference type="SMART" id="SM00729">
    <property type="entry name" value="Elp3"/>
    <property type="match status" value="1"/>
</dbReference>
<dbReference type="SUPFAM" id="SSF102114">
    <property type="entry name" value="Radical SAM enzymes"/>
    <property type="match status" value="1"/>
</dbReference>
<dbReference type="PROSITE" id="PS51918">
    <property type="entry name" value="RADICAL_SAM"/>
    <property type="match status" value="1"/>
</dbReference>
<sequence>MSKPIVMERGVKYRDADKMALIPVKNVITERDALLRKPEWMKIKLPADSTRIQGIKAAMRKNGLHSVCEEASCPNLAECFNHGTATFMILGAICTRRCPFCDVAHGRPVAPDAEEPQKLAQTIADMALRYVVITSVDRDDLRDGGAQHFADCITAIRAKSPEIKIETLVPDFRGRMDRALEILNATPPDVFNHNLENVPRIYRQVRPGADYNWSLKLLERFKEAHPEIPTKSGLMVGLGETNAEIIEVMRDLRRHGVTMLTLGQYLQPSRHHLPVQRYVSPEEFDEMKAEALAMGFTHAACGPFVRSSYHADLQAKGMEVK</sequence>
<gene>
    <name evidence="1" type="primary">lipA</name>
    <name type="ordered locus">SARI_02300</name>
</gene>
<reference key="1">
    <citation type="submission" date="2007-11" db="EMBL/GenBank/DDBJ databases">
        <authorList>
            <consortium name="The Salmonella enterica serovar Arizonae Genome Sequencing Project"/>
            <person name="McClelland M."/>
            <person name="Sanderson E.K."/>
            <person name="Porwollik S."/>
            <person name="Spieth J."/>
            <person name="Clifton W.S."/>
            <person name="Fulton R."/>
            <person name="Chunyan W."/>
            <person name="Wollam A."/>
            <person name="Shah N."/>
            <person name="Pepin K."/>
            <person name="Bhonagiri V."/>
            <person name="Nash W."/>
            <person name="Johnson M."/>
            <person name="Thiruvilangam P."/>
            <person name="Wilson R."/>
        </authorList>
    </citation>
    <scope>NUCLEOTIDE SEQUENCE [LARGE SCALE GENOMIC DNA]</scope>
    <source>
        <strain>ATCC BAA-731 / CDC346-86 / RSK2980</strain>
    </source>
</reference>
<keyword id="KW-0004">4Fe-4S</keyword>
<keyword id="KW-0963">Cytoplasm</keyword>
<keyword id="KW-0408">Iron</keyword>
<keyword id="KW-0411">Iron-sulfur</keyword>
<keyword id="KW-0479">Metal-binding</keyword>
<keyword id="KW-1185">Reference proteome</keyword>
<keyword id="KW-0949">S-adenosyl-L-methionine</keyword>
<keyword id="KW-0808">Transferase</keyword>
<proteinExistence type="inferred from homology"/>
<evidence type="ECO:0000255" key="1">
    <source>
        <dbReference type="HAMAP-Rule" id="MF_00206"/>
    </source>
</evidence>
<evidence type="ECO:0000255" key="2">
    <source>
        <dbReference type="PROSITE-ProRule" id="PRU01266"/>
    </source>
</evidence>
<feature type="chain" id="PRO_1000077965" description="Lipoyl synthase">
    <location>
        <begin position="1"/>
        <end position="321"/>
    </location>
</feature>
<feature type="domain" description="Radical SAM core" evidence="2">
    <location>
        <begin position="80"/>
        <end position="297"/>
    </location>
</feature>
<feature type="binding site" evidence="1">
    <location>
        <position position="68"/>
    </location>
    <ligand>
        <name>[4Fe-4S] cluster</name>
        <dbReference type="ChEBI" id="CHEBI:49883"/>
        <label>1</label>
    </ligand>
</feature>
<feature type="binding site" evidence="1">
    <location>
        <position position="73"/>
    </location>
    <ligand>
        <name>[4Fe-4S] cluster</name>
        <dbReference type="ChEBI" id="CHEBI:49883"/>
        <label>1</label>
    </ligand>
</feature>
<feature type="binding site" evidence="1">
    <location>
        <position position="79"/>
    </location>
    <ligand>
        <name>[4Fe-4S] cluster</name>
        <dbReference type="ChEBI" id="CHEBI:49883"/>
        <label>1</label>
    </ligand>
</feature>
<feature type="binding site" evidence="1">
    <location>
        <position position="94"/>
    </location>
    <ligand>
        <name>[4Fe-4S] cluster</name>
        <dbReference type="ChEBI" id="CHEBI:49883"/>
        <label>2</label>
        <note>4Fe-4S-S-AdoMet</note>
    </ligand>
</feature>
<feature type="binding site" evidence="1">
    <location>
        <position position="98"/>
    </location>
    <ligand>
        <name>[4Fe-4S] cluster</name>
        <dbReference type="ChEBI" id="CHEBI:49883"/>
        <label>2</label>
        <note>4Fe-4S-S-AdoMet</note>
    </ligand>
</feature>
<feature type="binding site" evidence="1">
    <location>
        <position position="101"/>
    </location>
    <ligand>
        <name>[4Fe-4S] cluster</name>
        <dbReference type="ChEBI" id="CHEBI:49883"/>
        <label>2</label>
        <note>4Fe-4S-S-AdoMet</note>
    </ligand>
</feature>
<feature type="binding site" evidence="1">
    <location>
        <position position="308"/>
    </location>
    <ligand>
        <name>[4Fe-4S] cluster</name>
        <dbReference type="ChEBI" id="CHEBI:49883"/>
        <label>1</label>
    </ligand>
</feature>